<name>ATPG_FRACC</name>
<comment type="function">
    <text evidence="1">Produces ATP from ADP in the presence of a proton gradient across the membrane. The gamma chain is believed to be important in regulating ATPase activity and the flow of protons through the CF(0) complex.</text>
</comment>
<comment type="subunit">
    <text evidence="1">F-type ATPases have 2 components, CF(1) - the catalytic core - and CF(0) - the membrane proton channel. CF(1) has five subunits: alpha(3), beta(3), gamma(1), delta(1), epsilon(1). CF(0) has three main subunits: a, b and c.</text>
</comment>
<comment type="subcellular location">
    <subcellularLocation>
        <location evidence="1">Cell membrane</location>
        <topology evidence="1">Peripheral membrane protein</topology>
    </subcellularLocation>
</comment>
<comment type="similarity">
    <text evidence="1">Belongs to the ATPase gamma chain family.</text>
</comment>
<dbReference type="EMBL" id="CP000249">
    <property type="protein sequence ID" value="ABD13060.1"/>
    <property type="molecule type" value="Genomic_DNA"/>
</dbReference>
<dbReference type="RefSeq" id="WP_011438084.1">
    <property type="nucleotide sequence ID" value="NZ_MSEA01000053.1"/>
</dbReference>
<dbReference type="SMR" id="Q2J6N2"/>
<dbReference type="STRING" id="106370.Francci3_3708"/>
<dbReference type="KEGG" id="fra:Francci3_3708"/>
<dbReference type="eggNOG" id="COG0224">
    <property type="taxonomic scope" value="Bacteria"/>
</dbReference>
<dbReference type="HOGENOM" id="CLU_050669_0_0_11"/>
<dbReference type="OrthoDB" id="9812769at2"/>
<dbReference type="PhylomeDB" id="Q2J6N2"/>
<dbReference type="Proteomes" id="UP000001937">
    <property type="component" value="Chromosome"/>
</dbReference>
<dbReference type="GO" id="GO:0005886">
    <property type="term" value="C:plasma membrane"/>
    <property type="evidence" value="ECO:0007669"/>
    <property type="project" value="UniProtKB-SubCell"/>
</dbReference>
<dbReference type="GO" id="GO:0045259">
    <property type="term" value="C:proton-transporting ATP synthase complex"/>
    <property type="evidence" value="ECO:0007669"/>
    <property type="project" value="UniProtKB-KW"/>
</dbReference>
<dbReference type="GO" id="GO:0005524">
    <property type="term" value="F:ATP binding"/>
    <property type="evidence" value="ECO:0007669"/>
    <property type="project" value="UniProtKB-UniRule"/>
</dbReference>
<dbReference type="GO" id="GO:0046933">
    <property type="term" value="F:proton-transporting ATP synthase activity, rotational mechanism"/>
    <property type="evidence" value="ECO:0007669"/>
    <property type="project" value="UniProtKB-UniRule"/>
</dbReference>
<dbReference type="GO" id="GO:0042777">
    <property type="term" value="P:proton motive force-driven plasma membrane ATP synthesis"/>
    <property type="evidence" value="ECO:0007669"/>
    <property type="project" value="UniProtKB-UniRule"/>
</dbReference>
<dbReference type="CDD" id="cd12151">
    <property type="entry name" value="F1-ATPase_gamma"/>
    <property type="match status" value="1"/>
</dbReference>
<dbReference type="Gene3D" id="3.40.1380.10">
    <property type="match status" value="1"/>
</dbReference>
<dbReference type="Gene3D" id="1.10.287.80">
    <property type="entry name" value="ATP synthase, gamma subunit, helix hairpin domain"/>
    <property type="match status" value="1"/>
</dbReference>
<dbReference type="HAMAP" id="MF_00815">
    <property type="entry name" value="ATP_synth_gamma_bact"/>
    <property type="match status" value="1"/>
</dbReference>
<dbReference type="InterPro" id="IPR035968">
    <property type="entry name" value="ATP_synth_F1_ATPase_gsu"/>
</dbReference>
<dbReference type="InterPro" id="IPR000131">
    <property type="entry name" value="ATP_synth_F1_gsu"/>
</dbReference>
<dbReference type="InterPro" id="IPR023632">
    <property type="entry name" value="ATP_synth_F1_gsu_CS"/>
</dbReference>
<dbReference type="NCBIfam" id="TIGR01146">
    <property type="entry name" value="ATPsyn_F1gamma"/>
    <property type="match status" value="1"/>
</dbReference>
<dbReference type="NCBIfam" id="NF004145">
    <property type="entry name" value="PRK05621.1-2"/>
    <property type="match status" value="1"/>
</dbReference>
<dbReference type="PANTHER" id="PTHR11693">
    <property type="entry name" value="ATP SYNTHASE GAMMA CHAIN"/>
    <property type="match status" value="1"/>
</dbReference>
<dbReference type="PANTHER" id="PTHR11693:SF22">
    <property type="entry name" value="ATP SYNTHASE SUBUNIT GAMMA, MITOCHONDRIAL"/>
    <property type="match status" value="1"/>
</dbReference>
<dbReference type="Pfam" id="PF00231">
    <property type="entry name" value="ATP-synt"/>
    <property type="match status" value="1"/>
</dbReference>
<dbReference type="PRINTS" id="PR00126">
    <property type="entry name" value="ATPASEGAMMA"/>
</dbReference>
<dbReference type="SUPFAM" id="SSF52943">
    <property type="entry name" value="ATP synthase (F1-ATPase), gamma subunit"/>
    <property type="match status" value="1"/>
</dbReference>
<dbReference type="PROSITE" id="PS00153">
    <property type="entry name" value="ATPASE_GAMMA"/>
    <property type="match status" value="1"/>
</dbReference>
<evidence type="ECO:0000255" key="1">
    <source>
        <dbReference type="HAMAP-Rule" id="MF_00815"/>
    </source>
</evidence>
<feature type="chain" id="PRO_1000053212" description="ATP synthase gamma chain">
    <location>
        <begin position="1"/>
        <end position="298"/>
    </location>
</feature>
<proteinExistence type="inferred from homology"/>
<reference key="1">
    <citation type="journal article" date="2007" name="Genome Res.">
        <title>Genome characteristics of facultatively symbiotic Frankia sp. strains reflect host range and host plant biogeography.</title>
        <authorList>
            <person name="Normand P."/>
            <person name="Lapierre P."/>
            <person name="Tisa L.S."/>
            <person name="Gogarten J.P."/>
            <person name="Alloisio N."/>
            <person name="Bagnarol E."/>
            <person name="Bassi C.A."/>
            <person name="Berry A.M."/>
            <person name="Bickhart D.M."/>
            <person name="Choisne N."/>
            <person name="Couloux A."/>
            <person name="Cournoyer B."/>
            <person name="Cruveiller S."/>
            <person name="Daubin V."/>
            <person name="Demange N."/>
            <person name="Francino M.P."/>
            <person name="Goltsman E."/>
            <person name="Huang Y."/>
            <person name="Kopp O.R."/>
            <person name="Labarre L."/>
            <person name="Lapidus A."/>
            <person name="Lavire C."/>
            <person name="Marechal J."/>
            <person name="Martinez M."/>
            <person name="Mastronunzio J.E."/>
            <person name="Mullin B.C."/>
            <person name="Niemann J."/>
            <person name="Pujic P."/>
            <person name="Rawnsley T."/>
            <person name="Rouy Z."/>
            <person name="Schenowitz C."/>
            <person name="Sellstedt A."/>
            <person name="Tavares F."/>
            <person name="Tomkins J.P."/>
            <person name="Vallenet D."/>
            <person name="Valverde C."/>
            <person name="Wall L.G."/>
            <person name="Wang Y."/>
            <person name="Medigue C."/>
            <person name="Benson D.R."/>
        </authorList>
    </citation>
    <scope>NUCLEOTIDE SEQUENCE [LARGE SCALE GENOMIC DNA]</scope>
    <source>
        <strain>DSM 45818 / CECT 9043 / HFP020203 / CcI3</strain>
    </source>
</reference>
<organism>
    <name type="scientific">Frankia casuarinae (strain DSM 45818 / CECT 9043 / HFP020203 / CcI3)</name>
    <dbReference type="NCBI Taxonomy" id="106370"/>
    <lineage>
        <taxon>Bacteria</taxon>
        <taxon>Bacillati</taxon>
        <taxon>Actinomycetota</taxon>
        <taxon>Actinomycetes</taxon>
        <taxon>Frankiales</taxon>
        <taxon>Frankiaceae</taxon>
        <taxon>Frankia</taxon>
    </lineage>
</organism>
<gene>
    <name evidence="1" type="primary">atpG</name>
    <name type="ordered locus">Francci3_3708</name>
</gene>
<accession>Q2J6N2</accession>
<keyword id="KW-0066">ATP synthesis</keyword>
<keyword id="KW-1003">Cell membrane</keyword>
<keyword id="KW-0139">CF(1)</keyword>
<keyword id="KW-0375">Hydrogen ion transport</keyword>
<keyword id="KW-0406">Ion transport</keyword>
<keyword id="KW-0472">Membrane</keyword>
<keyword id="KW-1185">Reference proteome</keyword>
<keyword id="KW-0813">Transport</keyword>
<protein>
    <recommendedName>
        <fullName evidence="1">ATP synthase gamma chain</fullName>
    </recommendedName>
    <alternativeName>
        <fullName evidence="1">ATP synthase F1 sector gamma subunit</fullName>
    </alternativeName>
    <alternativeName>
        <fullName evidence="1">F-ATPase gamma subunit</fullName>
    </alternativeName>
</protein>
<sequence length="298" mass="32302">MAGQLREYRRRIRSVQSTKKITRAMELIAASRIAKARARVAAARPYAEEITRVIEAVAAQTTIDHPLTTERPGAARAAVVVITSDRGLAGGYSSNALRRTGELIELLHSEGKETDLHVVGRKGTGYYRFRGRAMSGEYTGFSEQPSYADAKSVADALIAAFIATSENGGVDEIHVVHTEYVSAITQTPVARRLLPMVLTETDEPPRGGPLPQYEFEPSAEGVLDALLPRYVESRLYAALLESAASESAARQRAMKSATDNAEDLIKRYTRQANRARQDAITQEISEIVGGANALASGT</sequence>